<keyword id="KW-0007">Acetylation</keyword>
<keyword id="KW-0507">mRNA processing</keyword>
<keyword id="KW-0508">mRNA splicing</keyword>
<keyword id="KW-0539">Nucleus</keyword>
<keyword id="KW-1185">Reference proteome</keyword>
<keyword id="KW-0687">Ribonucleoprotein</keyword>
<keyword id="KW-0694">RNA-binding</keyword>
<keyword id="KW-0747">Spliceosome</keyword>
<evidence type="ECO:0000250" key="1">
    <source>
        <dbReference type="UniProtKB" id="Q9Y4Y9"/>
    </source>
</evidence>
<evidence type="ECO:0000255" key="2">
    <source>
        <dbReference type="PROSITE-ProRule" id="PRU01346"/>
    </source>
</evidence>
<evidence type="ECO:0000305" key="3"/>
<proteinExistence type="inferred from homology"/>
<sequence length="91" mass="9937">MAANATTNPSQLLPLELVDKCIGSRIHIVMKSDKEIVGTLLGFDDFVNMVLEDVTEFEITPEGRRITKLDQILLNGNNITMLVPGGEGPEV</sequence>
<gene>
    <name type="primary">LSM5</name>
</gene>
<dbReference type="EMBL" id="CR860671">
    <property type="protein sequence ID" value="CAH92788.1"/>
    <property type="molecule type" value="mRNA"/>
</dbReference>
<dbReference type="RefSeq" id="NP_001126628.1">
    <property type="nucleotide sequence ID" value="NM_001133156.1"/>
</dbReference>
<dbReference type="SMR" id="Q5R628"/>
<dbReference type="FunCoup" id="Q5R628">
    <property type="interactions" value="1708"/>
</dbReference>
<dbReference type="STRING" id="9601.ENSPPYP00000019797"/>
<dbReference type="Ensembl" id="ENSPPYT00000059305.1">
    <property type="protein sequence ID" value="ENSPPYP00000027473.1"/>
    <property type="gene ID" value="ENSPPYG00000017661.2"/>
</dbReference>
<dbReference type="GeneID" id="100173625"/>
<dbReference type="KEGG" id="pon:100173625"/>
<dbReference type="CTD" id="23658"/>
<dbReference type="eggNOG" id="KOG1775">
    <property type="taxonomic scope" value="Eukaryota"/>
</dbReference>
<dbReference type="GeneTree" id="ENSGT00390000001455"/>
<dbReference type="InParanoid" id="Q5R628"/>
<dbReference type="OMA" id="YETTPQG"/>
<dbReference type="OrthoDB" id="429711at2759"/>
<dbReference type="Proteomes" id="UP000001595">
    <property type="component" value="Chromosome 7"/>
</dbReference>
<dbReference type="GO" id="GO:1990726">
    <property type="term" value="C:Lsm1-7-Pat1 complex"/>
    <property type="evidence" value="ECO:0007669"/>
    <property type="project" value="TreeGrafter"/>
</dbReference>
<dbReference type="GO" id="GO:0120115">
    <property type="term" value="C:Lsm2-8 complex"/>
    <property type="evidence" value="ECO:0000250"/>
    <property type="project" value="UniProtKB"/>
</dbReference>
<dbReference type="GO" id="GO:0005634">
    <property type="term" value="C:nucleus"/>
    <property type="evidence" value="ECO:0000250"/>
    <property type="project" value="UniProtKB"/>
</dbReference>
<dbReference type="GO" id="GO:0071005">
    <property type="term" value="C:U2-type precatalytic spliceosome"/>
    <property type="evidence" value="ECO:0000250"/>
    <property type="project" value="UniProtKB"/>
</dbReference>
<dbReference type="GO" id="GO:0046540">
    <property type="term" value="C:U4/U6 x U5 tri-snRNP complex"/>
    <property type="evidence" value="ECO:0000250"/>
    <property type="project" value="UniProtKB"/>
</dbReference>
<dbReference type="GO" id="GO:0005688">
    <property type="term" value="C:U6 snRNP"/>
    <property type="evidence" value="ECO:0007669"/>
    <property type="project" value="TreeGrafter"/>
</dbReference>
<dbReference type="GO" id="GO:0003723">
    <property type="term" value="F:RNA binding"/>
    <property type="evidence" value="ECO:0007669"/>
    <property type="project" value="UniProtKB-KW"/>
</dbReference>
<dbReference type="GO" id="GO:0000398">
    <property type="term" value="P:mRNA splicing, via spliceosome"/>
    <property type="evidence" value="ECO:0000250"/>
    <property type="project" value="UniProtKB"/>
</dbReference>
<dbReference type="CDD" id="cd01732">
    <property type="entry name" value="LSm5"/>
    <property type="match status" value="1"/>
</dbReference>
<dbReference type="FunFam" id="2.30.30.100:FF:000003">
    <property type="entry name" value="U6 snRNA-associated Sm-like protein LSm5"/>
    <property type="match status" value="1"/>
</dbReference>
<dbReference type="Gene3D" id="2.30.30.100">
    <property type="match status" value="1"/>
</dbReference>
<dbReference type="InterPro" id="IPR033871">
    <property type="entry name" value="LSm5"/>
</dbReference>
<dbReference type="InterPro" id="IPR010920">
    <property type="entry name" value="LSM_dom_sf"/>
</dbReference>
<dbReference type="InterPro" id="IPR047575">
    <property type="entry name" value="Sm"/>
</dbReference>
<dbReference type="InterPro" id="IPR001163">
    <property type="entry name" value="Sm_dom_euk/arc"/>
</dbReference>
<dbReference type="PANTHER" id="PTHR20971">
    <property type="entry name" value="U6 SNRNA-ASSOCIATED PROTEIN"/>
    <property type="match status" value="1"/>
</dbReference>
<dbReference type="PANTHER" id="PTHR20971:SF0">
    <property type="entry name" value="U6 SNRNA-ASSOCIATED SM-LIKE PROTEIN LSM5"/>
    <property type="match status" value="1"/>
</dbReference>
<dbReference type="Pfam" id="PF01423">
    <property type="entry name" value="LSM"/>
    <property type="match status" value="1"/>
</dbReference>
<dbReference type="SMART" id="SM00651">
    <property type="entry name" value="Sm"/>
    <property type="match status" value="1"/>
</dbReference>
<dbReference type="SUPFAM" id="SSF50182">
    <property type="entry name" value="Sm-like ribonucleoproteins"/>
    <property type="match status" value="1"/>
</dbReference>
<dbReference type="PROSITE" id="PS52002">
    <property type="entry name" value="SM"/>
    <property type="match status" value="1"/>
</dbReference>
<organism>
    <name type="scientific">Pongo abelii</name>
    <name type="common">Sumatran orangutan</name>
    <name type="synonym">Pongo pygmaeus abelii</name>
    <dbReference type="NCBI Taxonomy" id="9601"/>
    <lineage>
        <taxon>Eukaryota</taxon>
        <taxon>Metazoa</taxon>
        <taxon>Chordata</taxon>
        <taxon>Craniata</taxon>
        <taxon>Vertebrata</taxon>
        <taxon>Euteleostomi</taxon>
        <taxon>Mammalia</taxon>
        <taxon>Eutheria</taxon>
        <taxon>Euarchontoglires</taxon>
        <taxon>Primates</taxon>
        <taxon>Haplorrhini</taxon>
        <taxon>Catarrhini</taxon>
        <taxon>Hominidae</taxon>
        <taxon>Pongo</taxon>
    </lineage>
</organism>
<name>LSM5_PONAB</name>
<reference key="1">
    <citation type="submission" date="2004-11" db="EMBL/GenBank/DDBJ databases">
        <authorList>
            <consortium name="The German cDNA consortium"/>
        </authorList>
    </citation>
    <scope>NUCLEOTIDE SEQUENCE [LARGE SCALE MRNA]</scope>
    <source>
        <tissue>Brain cortex</tissue>
    </source>
</reference>
<protein>
    <recommendedName>
        <fullName>U6 snRNA-associated Sm-like protein LSm5</fullName>
    </recommendedName>
</protein>
<feature type="initiator methionine" description="Removed" evidence="1">
    <location>
        <position position="1"/>
    </location>
</feature>
<feature type="chain" id="PRO_0000238671" description="U6 snRNA-associated Sm-like protein LSm5">
    <location>
        <begin position="2"/>
        <end position="91"/>
    </location>
</feature>
<feature type="domain" description="Sm" evidence="2">
    <location>
        <begin position="13"/>
        <end position="88"/>
    </location>
</feature>
<feature type="modified residue" description="N-acetylalanine" evidence="1">
    <location>
        <position position="2"/>
    </location>
</feature>
<accession>Q5R628</accession>
<comment type="function">
    <text evidence="1">Plays a role in pre-mRNA splicing as component of the U4/U6-U5 tri-snRNP complex that is involved in spliceosome assembly, and as component of the precatalytic spliceosome (spliceosome B complex). The heptameric LSM2-8 complex binds specifically to the 3'-terminal U-tract of U6 snRNA.</text>
</comment>
<comment type="subunit">
    <text evidence="1">Component of the precatalytic spliceosome (spliceosome B complex). Component of the U4/U6-U5 tri-snRNP complex, a building block of the precatalytic spliceosome (spliceosome B complex). The U4/U6-U5 tri-snRNP complex is composed of the U4, U6 and U5 snRNAs and at least PRPF3, PRPF4, PRPF6, PRPF8, PRPF31, SNRNP200, TXNL4A, SNRNP40, SNRPB, SNRPD1, SNRPD2, SNRPD3, SNRPE, SNRPF, SNRPG, DDX23, CD2BP2, PPIH, SNU13, EFTUD2, SART1 and USP39, plus LSM2, LSM3, LSM4, LSM5, LSM6, LSM7 and LSM8. LSM2, LSM3, LSM4, LSM5, LSM6, LSM7 and LSM8 form a heptameric, ring-shaped subcomplex (the LSM2-8 complex) that is part of the U4/U6-U5 tri-snRNP complex and the precatalytic spliceosome.</text>
</comment>
<comment type="subcellular location">
    <subcellularLocation>
        <location evidence="1">Nucleus</location>
    </subcellularLocation>
</comment>
<comment type="similarity">
    <text evidence="3">Belongs to the snRNP Sm proteins family.</text>
</comment>